<name>MK14B_CYPCA</name>
<sequence>MSHKERPTFYRQELNKTIWEVPERYQNLSPVGSGAYGSVCSALDTKSGLRVAVKKLSRPFQSMIHAKRTYRELRLLKHMKHENVIGLLDAFSPATCLAGFNDVYLVTHLMGADLNNIVKCQKLTDDHVQFLIYQILRGLKYIHSADIIHRDLKPSNLAVNEDCELKILDFGLARLTDDEMTGYVATRWYRAPEIMLNWMHYNMTVDIWSVGCIMAELLTGRTLFPGTDHINQLQQIMRLTGTPPASLISRMPSHEARNYINSLSYMPKRNFADVFVGANPMAVDLLEKMLVLDTDKRITASQALAHPYFAQYHDPDDEPEADPYDQSFESRDLDIEEWKRLTYEEVISFEPPVFDGDEMES</sequence>
<comment type="function">
    <text evidence="1">Serine/threonine kinase which acts as an essential component of the MAP kinase signal transduction pathway. Mapk14b is one of the four p38 MAPKs which play an important role in the cascades of cellular responses evoked by extracellular stimuli such as pro-inflammatory cytokines or physical stress leading to direct activation of transcription factors. Accordingly, p38 MAPKs phosphorylate a broad range of proteins and it has been estimated that they may have approximately 200 to 300 substrates each. Some of the targets are downstream kinases which are activated through phosphorylation and further phosphorylate additional targets (By similarity).</text>
</comment>
<comment type="catalytic activity">
    <reaction evidence="3">
        <text>L-seryl-[protein] + ATP = O-phospho-L-seryl-[protein] + ADP + H(+)</text>
        <dbReference type="Rhea" id="RHEA:17989"/>
        <dbReference type="Rhea" id="RHEA-COMP:9863"/>
        <dbReference type="Rhea" id="RHEA-COMP:11604"/>
        <dbReference type="ChEBI" id="CHEBI:15378"/>
        <dbReference type="ChEBI" id="CHEBI:29999"/>
        <dbReference type="ChEBI" id="CHEBI:30616"/>
        <dbReference type="ChEBI" id="CHEBI:83421"/>
        <dbReference type="ChEBI" id="CHEBI:456216"/>
        <dbReference type="EC" id="2.7.11.24"/>
    </reaction>
</comment>
<comment type="catalytic activity">
    <reaction evidence="3">
        <text>L-threonyl-[protein] + ATP = O-phospho-L-threonyl-[protein] + ADP + H(+)</text>
        <dbReference type="Rhea" id="RHEA:46608"/>
        <dbReference type="Rhea" id="RHEA-COMP:11060"/>
        <dbReference type="Rhea" id="RHEA-COMP:11605"/>
        <dbReference type="ChEBI" id="CHEBI:15378"/>
        <dbReference type="ChEBI" id="CHEBI:30013"/>
        <dbReference type="ChEBI" id="CHEBI:30616"/>
        <dbReference type="ChEBI" id="CHEBI:61977"/>
        <dbReference type="ChEBI" id="CHEBI:456216"/>
        <dbReference type="EC" id="2.7.11.24"/>
    </reaction>
</comment>
<comment type="cofactor">
    <cofactor evidence="3">
        <name>Mg(2+)</name>
        <dbReference type="ChEBI" id="CHEBI:18420"/>
    </cofactor>
</comment>
<comment type="activity regulation">
    <text evidence="3">Activated by threonine and tyrosine phosphorylation by the dual specificity kinase, MKK6.</text>
</comment>
<comment type="subcellular location">
    <subcellularLocation>
        <location evidence="1">Cytoplasm</location>
    </subcellularLocation>
    <subcellularLocation>
        <location evidence="1">Nucleus</location>
    </subcellularLocation>
</comment>
<comment type="tissue specificity">
    <text evidence="3">Predominantly expressed in the ovary. Lower levels present in brain, gill, heart, spleen, kidney, muscle and gut.</text>
</comment>
<comment type="domain">
    <text>The TXY motif contains the threonine and tyrosine residues whose phosphorylation activates the MAP kinases.</text>
</comment>
<comment type="PTM">
    <text evidence="3">Dually phosphorylated on Thr-181 and Tyr-183, which activates the enzyme.</text>
</comment>
<comment type="similarity">
    <text evidence="4">Belongs to the protein kinase superfamily. CMGC Ser/Thr protein kinase family. MAP kinase subfamily.</text>
</comment>
<keyword id="KW-0067">ATP-binding</keyword>
<keyword id="KW-0963">Cytoplasm</keyword>
<keyword id="KW-0418">Kinase</keyword>
<keyword id="KW-0547">Nucleotide-binding</keyword>
<keyword id="KW-0539">Nucleus</keyword>
<keyword id="KW-0597">Phosphoprotein</keyword>
<keyword id="KW-1185">Reference proteome</keyword>
<keyword id="KW-0723">Serine/threonine-protein kinase</keyword>
<keyword id="KW-0346">Stress response</keyword>
<keyword id="KW-0804">Transcription</keyword>
<keyword id="KW-0805">Transcription regulation</keyword>
<keyword id="KW-0808">Transferase</keyword>
<accession>Q9I958</accession>
<gene>
    <name type="primary">mapk14b</name>
</gene>
<protein>
    <recommendedName>
        <fullName>Mitogen-activated protein kinase 14B</fullName>
        <shortName>MAP kinase 14B</shortName>
        <shortName>MAPK 14B</shortName>
        <ecNumber>2.7.11.24</ecNumber>
    </recommendedName>
    <alternativeName>
        <fullName>Mitogen-activated protein kinase p38b</fullName>
        <shortName>MAP kinase p38b</shortName>
        <shortName>cp38b</shortName>
    </alternativeName>
</protein>
<feature type="chain" id="PRO_0000186298" description="Mitogen-activated protein kinase 14B">
    <location>
        <begin position="1"/>
        <end position="361"/>
    </location>
</feature>
<feature type="domain" description="Protein kinase" evidence="2">
    <location>
        <begin position="25"/>
        <end position="309"/>
    </location>
</feature>
<feature type="short sequence motif" description="TXY">
    <location>
        <begin position="181"/>
        <end position="183"/>
    </location>
</feature>
<feature type="active site" description="Proton acceptor" evidence="2">
    <location>
        <position position="151"/>
    </location>
</feature>
<feature type="binding site" evidence="2">
    <location>
        <begin position="31"/>
        <end position="39"/>
    </location>
    <ligand>
        <name>ATP</name>
        <dbReference type="ChEBI" id="CHEBI:30616"/>
    </ligand>
</feature>
<feature type="binding site" evidence="2">
    <location>
        <position position="54"/>
    </location>
    <ligand>
        <name>ATP</name>
        <dbReference type="ChEBI" id="CHEBI:30616"/>
    </ligand>
</feature>
<feature type="modified residue" description="Phosphothreonine; by MAP2K6" evidence="3">
    <location>
        <position position="181"/>
    </location>
</feature>
<feature type="modified residue" description="Phosphotyrosine; by MAP2K6" evidence="3">
    <location>
        <position position="183"/>
    </location>
</feature>
<dbReference type="EC" id="2.7.11.24"/>
<dbReference type="EMBL" id="AB023481">
    <property type="protein sequence ID" value="BAA96415.1"/>
    <property type="molecule type" value="mRNA"/>
</dbReference>
<dbReference type="SMR" id="Q9I958"/>
<dbReference type="iPTMnet" id="Q9I958"/>
<dbReference type="Ensembl" id="ENSCCRT00015113040.1">
    <property type="protein sequence ID" value="ENSCCRP00015109567.1"/>
    <property type="gene ID" value="ENSCCRG00015043456.1"/>
</dbReference>
<dbReference type="BRENDA" id="2.7.11.24">
    <property type="organism ID" value="1195"/>
</dbReference>
<dbReference type="Proteomes" id="UP000694384">
    <property type="component" value="Unplaced"/>
</dbReference>
<dbReference type="Proteomes" id="UP000694427">
    <property type="component" value="Unplaced"/>
</dbReference>
<dbReference type="Proteomes" id="UP000694700">
    <property type="component" value="Unplaced"/>
</dbReference>
<dbReference type="Proteomes" id="UP000694701">
    <property type="component" value="Unplaced"/>
</dbReference>
<dbReference type="Proteomes" id="UP001155660">
    <property type="component" value="Unplaced"/>
</dbReference>
<dbReference type="GO" id="GO:0005737">
    <property type="term" value="C:cytoplasm"/>
    <property type="evidence" value="ECO:0000250"/>
    <property type="project" value="UniProtKB"/>
</dbReference>
<dbReference type="GO" id="GO:0005634">
    <property type="term" value="C:nucleus"/>
    <property type="evidence" value="ECO:0000250"/>
    <property type="project" value="UniProtKB"/>
</dbReference>
<dbReference type="GO" id="GO:0005524">
    <property type="term" value="F:ATP binding"/>
    <property type="evidence" value="ECO:0007669"/>
    <property type="project" value="UniProtKB-KW"/>
</dbReference>
<dbReference type="GO" id="GO:0004707">
    <property type="term" value="F:MAP kinase activity"/>
    <property type="evidence" value="ECO:0000314"/>
    <property type="project" value="UniProtKB"/>
</dbReference>
<dbReference type="GO" id="GO:0106310">
    <property type="term" value="F:protein serine kinase activity"/>
    <property type="evidence" value="ECO:0007669"/>
    <property type="project" value="RHEA"/>
</dbReference>
<dbReference type="GO" id="GO:0035556">
    <property type="term" value="P:intracellular signal transduction"/>
    <property type="evidence" value="ECO:0000250"/>
    <property type="project" value="UniProtKB"/>
</dbReference>
<dbReference type="GO" id="GO:0038066">
    <property type="term" value="P:p38MAPK cascade"/>
    <property type="evidence" value="ECO:0000314"/>
    <property type="project" value="UniProtKB"/>
</dbReference>
<dbReference type="GO" id="GO:0045663">
    <property type="term" value="P:positive regulation of myoblast differentiation"/>
    <property type="evidence" value="ECO:0000250"/>
    <property type="project" value="UniProtKB"/>
</dbReference>
<dbReference type="GO" id="GO:1901741">
    <property type="term" value="P:positive regulation of myoblast fusion"/>
    <property type="evidence" value="ECO:0000250"/>
    <property type="project" value="UniProtKB"/>
</dbReference>
<dbReference type="GO" id="GO:0010831">
    <property type="term" value="P:positive regulation of myotube differentiation"/>
    <property type="evidence" value="ECO:0000250"/>
    <property type="project" value="UniProtKB"/>
</dbReference>
<dbReference type="GO" id="GO:0006357">
    <property type="term" value="P:regulation of transcription by RNA polymerase II"/>
    <property type="evidence" value="ECO:0000250"/>
    <property type="project" value="UniProtKB"/>
</dbReference>
<dbReference type="FunFam" id="1.10.510.10:FF:000063">
    <property type="entry name" value="Mitogen-activated protein kinase 14"/>
    <property type="match status" value="1"/>
</dbReference>
<dbReference type="FunFam" id="3.30.200.20:FF:000769">
    <property type="entry name" value="Mitogen-activated protein kinase 14"/>
    <property type="match status" value="1"/>
</dbReference>
<dbReference type="Gene3D" id="3.30.200.20">
    <property type="entry name" value="Phosphorylase Kinase, domain 1"/>
    <property type="match status" value="1"/>
</dbReference>
<dbReference type="Gene3D" id="1.10.510.10">
    <property type="entry name" value="Transferase(Phosphotransferase) domain 1"/>
    <property type="match status" value="1"/>
</dbReference>
<dbReference type="InterPro" id="IPR011009">
    <property type="entry name" value="Kinase-like_dom_sf"/>
</dbReference>
<dbReference type="InterPro" id="IPR050117">
    <property type="entry name" value="MAP_kinase"/>
</dbReference>
<dbReference type="InterPro" id="IPR003527">
    <property type="entry name" value="MAP_kinase_CS"/>
</dbReference>
<dbReference type="InterPro" id="IPR008352">
    <property type="entry name" value="MAPK_p38-like"/>
</dbReference>
<dbReference type="InterPro" id="IPR000719">
    <property type="entry name" value="Prot_kinase_dom"/>
</dbReference>
<dbReference type="InterPro" id="IPR017441">
    <property type="entry name" value="Protein_kinase_ATP_BS"/>
</dbReference>
<dbReference type="PANTHER" id="PTHR24055">
    <property type="entry name" value="MITOGEN-ACTIVATED PROTEIN KINASE"/>
    <property type="match status" value="1"/>
</dbReference>
<dbReference type="Pfam" id="PF00069">
    <property type="entry name" value="Pkinase"/>
    <property type="match status" value="1"/>
</dbReference>
<dbReference type="PRINTS" id="PR01773">
    <property type="entry name" value="P38MAPKINASE"/>
</dbReference>
<dbReference type="SMART" id="SM00220">
    <property type="entry name" value="S_TKc"/>
    <property type="match status" value="1"/>
</dbReference>
<dbReference type="SUPFAM" id="SSF56112">
    <property type="entry name" value="Protein kinase-like (PK-like)"/>
    <property type="match status" value="1"/>
</dbReference>
<dbReference type="PROSITE" id="PS01351">
    <property type="entry name" value="MAPK"/>
    <property type="match status" value="1"/>
</dbReference>
<dbReference type="PROSITE" id="PS00107">
    <property type="entry name" value="PROTEIN_KINASE_ATP"/>
    <property type="match status" value="1"/>
</dbReference>
<dbReference type="PROSITE" id="PS50011">
    <property type="entry name" value="PROTEIN_KINASE_DOM"/>
    <property type="match status" value="1"/>
</dbReference>
<proteinExistence type="evidence at protein level"/>
<evidence type="ECO:0000250" key="1"/>
<evidence type="ECO:0000255" key="2">
    <source>
        <dbReference type="PROSITE-ProRule" id="PRU00159"/>
    </source>
</evidence>
<evidence type="ECO:0000269" key="3">
    <source>
    </source>
</evidence>
<evidence type="ECO:0000305" key="4"/>
<evidence type="ECO:0000312" key="5">
    <source>
        <dbReference type="EMBL" id="BAA96415.1"/>
    </source>
</evidence>
<organism evidence="5">
    <name type="scientific">Cyprinus carpio</name>
    <name type="common">Common carp</name>
    <dbReference type="NCBI Taxonomy" id="7962"/>
    <lineage>
        <taxon>Eukaryota</taxon>
        <taxon>Metazoa</taxon>
        <taxon>Chordata</taxon>
        <taxon>Craniata</taxon>
        <taxon>Vertebrata</taxon>
        <taxon>Euteleostomi</taxon>
        <taxon>Actinopterygii</taxon>
        <taxon>Neopterygii</taxon>
        <taxon>Teleostei</taxon>
        <taxon>Ostariophysi</taxon>
        <taxon>Cypriniformes</taxon>
        <taxon>Cyprinidae</taxon>
        <taxon>Cyprininae</taxon>
        <taxon>Cyprinus</taxon>
    </lineage>
</organism>
<reference evidence="4" key="1">
    <citation type="journal article" date="2000" name="Eur. J. Biochem.">
        <title>Identification of a nuclear export signal in MKK6, an activator of the carp p38 mitogen-activated protein kinases.</title>
        <authorList>
            <person name="Hashimoto H."/>
            <person name="Fukuda M."/>
            <person name="Matsuo Y."/>
            <person name="Yokoyama Y."/>
            <person name="Nishida E."/>
            <person name="Toyohara H."/>
            <person name="Sakaguchi M."/>
        </authorList>
    </citation>
    <scope>NUCLEOTIDE SEQUENCE [MRNA]</scope>
    <scope>COFACTOR</scope>
    <scope>TISSUE SPECIFICITY</scope>
    <scope>PHOSPHORYLATION AT THR-181 AND TYR-183</scope>
    <scope>ACTIVITY REGULATION</scope>
    <source>
        <tissue>Ovary</tissue>
    </source>
</reference>